<reference key="1">
    <citation type="journal article" date="2003" name="Proc. Natl. Acad. Sci. U.S.A.">
        <title>The genome sequence of Blochmannia floridanus: comparative analysis of reduced genomes.</title>
        <authorList>
            <person name="Gil R."/>
            <person name="Silva F.J."/>
            <person name="Zientz E."/>
            <person name="Delmotte F."/>
            <person name="Gonzalez-Candelas F."/>
            <person name="Latorre A."/>
            <person name="Rausell C."/>
            <person name="Kamerbeek J."/>
            <person name="Gadau J."/>
            <person name="Hoelldobler B."/>
            <person name="van Ham R.C.H.J."/>
            <person name="Gross R."/>
            <person name="Moya A."/>
        </authorList>
    </citation>
    <scope>NUCLEOTIDE SEQUENCE [LARGE SCALE GENOMIC DNA]</scope>
</reference>
<gene>
    <name evidence="1" type="primary">nuoH</name>
    <name type="ordered locus">Bfl487</name>
</gene>
<protein>
    <recommendedName>
        <fullName evidence="1">NADH-quinone oxidoreductase subunit H</fullName>
        <ecNumber evidence="1">7.1.1.-</ecNumber>
    </recommendedName>
    <alternativeName>
        <fullName evidence="1">NADH dehydrogenase I subunit H</fullName>
    </alternativeName>
    <alternativeName>
        <fullName evidence="1">NDH-1 subunit H</fullName>
    </alternativeName>
</protein>
<feature type="chain" id="PRO_0000244895" description="NADH-quinone oxidoreductase subunit H">
    <location>
        <begin position="1"/>
        <end position="322"/>
    </location>
</feature>
<feature type="transmembrane region" description="Helical" evidence="1">
    <location>
        <begin position="14"/>
        <end position="34"/>
    </location>
</feature>
<feature type="transmembrane region" description="Helical" evidence="1">
    <location>
        <begin position="81"/>
        <end position="101"/>
    </location>
</feature>
<feature type="transmembrane region" description="Helical" evidence="1">
    <location>
        <begin position="114"/>
        <end position="134"/>
    </location>
</feature>
<feature type="transmembrane region" description="Helical" evidence="1">
    <location>
        <begin position="149"/>
        <end position="169"/>
    </location>
</feature>
<feature type="transmembrane region" description="Helical" evidence="1">
    <location>
        <begin position="186"/>
        <end position="206"/>
    </location>
</feature>
<feature type="transmembrane region" description="Helical" evidence="1">
    <location>
        <begin position="237"/>
        <end position="257"/>
    </location>
</feature>
<feature type="transmembrane region" description="Helical" evidence="1">
    <location>
        <begin position="265"/>
        <end position="285"/>
    </location>
</feature>
<feature type="transmembrane region" description="Helical" evidence="1">
    <location>
        <begin position="302"/>
        <end position="322"/>
    </location>
</feature>
<comment type="function">
    <text evidence="1">NDH-1 shuttles electrons from NADH, via FMN and iron-sulfur (Fe-S) centers, to quinones in the respiratory chain. The immediate electron acceptor for the enzyme in this species is believed to be ubiquinone. Couples the redox reaction to proton translocation (for every two electrons transferred, four hydrogen ions are translocated across the cytoplasmic membrane), and thus conserves the redox energy in a proton gradient. This subunit may bind ubiquinone.</text>
</comment>
<comment type="catalytic activity">
    <reaction evidence="1">
        <text>a quinone + NADH + 5 H(+)(in) = a quinol + NAD(+) + 4 H(+)(out)</text>
        <dbReference type="Rhea" id="RHEA:57888"/>
        <dbReference type="ChEBI" id="CHEBI:15378"/>
        <dbReference type="ChEBI" id="CHEBI:24646"/>
        <dbReference type="ChEBI" id="CHEBI:57540"/>
        <dbReference type="ChEBI" id="CHEBI:57945"/>
        <dbReference type="ChEBI" id="CHEBI:132124"/>
    </reaction>
</comment>
<comment type="subunit">
    <text evidence="1">NDH-1 is composed of 13 different subunits. Subunits NuoA, H, J, K, L, M, N constitute the membrane sector of the complex.</text>
</comment>
<comment type="subcellular location">
    <subcellularLocation>
        <location evidence="1">Cell inner membrane</location>
        <topology evidence="1">Multi-pass membrane protein</topology>
    </subcellularLocation>
</comment>
<comment type="similarity">
    <text evidence="1">Belongs to the complex I subunit 1 family.</text>
</comment>
<dbReference type="EC" id="7.1.1.-" evidence="1"/>
<dbReference type="EMBL" id="BX248583">
    <property type="protein sequence ID" value="CAD83176.1"/>
    <property type="molecule type" value="Genomic_DNA"/>
</dbReference>
<dbReference type="SMR" id="Q7VRV8"/>
<dbReference type="STRING" id="203907.Bfl487"/>
<dbReference type="KEGG" id="bfl:Bfl487"/>
<dbReference type="eggNOG" id="COG1005">
    <property type="taxonomic scope" value="Bacteria"/>
</dbReference>
<dbReference type="HOGENOM" id="CLU_015134_0_1_6"/>
<dbReference type="OrthoDB" id="9803734at2"/>
<dbReference type="Proteomes" id="UP000002192">
    <property type="component" value="Chromosome"/>
</dbReference>
<dbReference type="GO" id="GO:0005886">
    <property type="term" value="C:plasma membrane"/>
    <property type="evidence" value="ECO:0007669"/>
    <property type="project" value="UniProtKB-SubCell"/>
</dbReference>
<dbReference type="GO" id="GO:0003954">
    <property type="term" value="F:NADH dehydrogenase activity"/>
    <property type="evidence" value="ECO:0007669"/>
    <property type="project" value="TreeGrafter"/>
</dbReference>
<dbReference type="GO" id="GO:0016655">
    <property type="term" value="F:oxidoreductase activity, acting on NAD(P)H, quinone or similar compound as acceptor"/>
    <property type="evidence" value="ECO:0007669"/>
    <property type="project" value="UniProtKB-UniRule"/>
</dbReference>
<dbReference type="GO" id="GO:0048038">
    <property type="term" value="F:quinone binding"/>
    <property type="evidence" value="ECO:0007669"/>
    <property type="project" value="UniProtKB-KW"/>
</dbReference>
<dbReference type="GO" id="GO:0009060">
    <property type="term" value="P:aerobic respiration"/>
    <property type="evidence" value="ECO:0007669"/>
    <property type="project" value="TreeGrafter"/>
</dbReference>
<dbReference type="HAMAP" id="MF_01350">
    <property type="entry name" value="NDH1_NuoH"/>
    <property type="match status" value="1"/>
</dbReference>
<dbReference type="InterPro" id="IPR001694">
    <property type="entry name" value="NADH_UbQ_OxRdtase_su1/FPO"/>
</dbReference>
<dbReference type="InterPro" id="IPR018086">
    <property type="entry name" value="NADH_UbQ_OxRdtase_su1_CS"/>
</dbReference>
<dbReference type="NCBIfam" id="NF004740">
    <property type="entry name" value="PRK06076.1-1"/>
    <property type="match status" value="1"/>
</dbReference>
<dbReference type="NCBIfam" id="NF004741">
    <property type="entry name" value="PRK06076.1-2"/>
    <property type="match status" value="1"/>
</dbReference>
<dbReference type="PANTHER" id="PTHR11432">
    <property type="entry name" value="NADH DEHYDROGENASE SUBUNIT 1"/>
    <property type="match status" value="1"/>
</dbReference>
<dbReference type="PANTHER" id="PTHR11432:SF3">
    <property type="entry name" value="NADH-UBIQUINONE OXIDOREDUCTASE CHAIN 1"/>
    <property type="match status" value="1"/>
</dbReference>
<dbReference type="Pfam" id="PF00146">
    <property type="entry name" value="NADHdh"/>
    <property type="match status" value="1"/>
</dbReference>
<dbReference type="PROSITE" id="PS00668">
    <property type="entry name" value="COMPLEX1_ND1_2"/>
    <property type="match status" value="1"/>
</dbReference>
<organism>
    <name type="scientific">Blochmanniella floridana</name>
    <dbReference type="NCBI Taxonomy" id="203907"/>
    <lineage>
        <taxon>Bacteria</taxon>
        <taxon>Pseudomonadati</taxon>
        <taxon>Pseudomonadota</taxon>
        <taxon>Gammaproteobacteria</taxon>
        <taxon>Enterobacterales</taxon>
        <taxon>Enterobacteriaceae</taxon>
        <taxon>ant endosymbionts</taxon>
        <taxon>Candidatus Blochmanniella</taxon>
    </lineage>
</organism>
<proteinExistence type="inferred from homology"/>
<keyword id="KW-0997">Cell inner membrane</keyword>
<keyword id="KW-1003">Cell membrane</keyword>
<keyword id="KW-0472">Membrane</keyword>
<keyword id="KW-0520">NAD</keyword>
<keyword id="KW-0874">Quinone</keyword>
<keyword id="KW-1185">Reference proteome</keyword>
<keyword id="KW-1278">Translocase</keyword>
<keyword id="KW-0812">Transmembrane</keyword>
<keyword id="KW-1133">Transmembrane helix</keyword>
<keyword id="KW-0830">Ubiquinone</keyword>
<accession>Q7VRV8</accession>
<sequence length="322" mass="36815">MNISFEKFLECLSIFMHSFFVLLMVVMCGAYMSFVERRLLALFQNRYGPNRVGWNGSLQLLADLIKIMFKEDWIPPFSDRYIFVLAPAIAFIISLMIIPVIPFTPSSVILHCNVGVLFFLMISALTVYSVLLAGWSSNNKYALIGAVRSIAQTLSYEVFLGLSLMGIVAKSGSFDLLNIVQDQKYLWNIVPQFLGFVVFFISGMALCHRHPFDQPESEQELVAGYHIEYSGMKFSLFFISEYISVISISSFMVTLFFGGWYGPWFPPVVWFIIKTFMIVLFFVLIRASLPRPRYDYVMLVGWKFLLPIALLNLLVTAGYILI</sequence>
<evidence type="ECO:0000255" key="1">
    <source>
        <dbReference type="HAMAP-Rule" id="MF_01350"/>
    </source>
</evidence>
<name>NUOH_BLOFL</name>